<accession>P65250</accession>
<accession>Q99S74</accession>
<sequence length="142" mass="15395">MAIIIGSDEAGKRLKEVIKSYLLDNKYDVVDVTEGQEVDFVDATLAVAKDVQSQEGNLGIVIDAFGAGSFMVATKIKGMIAAEVSDERSGYMTRGHNNSRMITMGSEIVGDTLAKNVVKGFVEGKYDGGRHQIRVDMLNKMC</sequence>
<keyword id="KW-0413">Isomerase</keyword>
<keyword id="KW-0423">Lactose metabolism</keyword>
<evidence type="ECO:0000255" key="1">
    <source>
        <dbReference type="HAMAP-Rule" id="MF_01555"/>
    </source>
</evidence>
<gene>
    <name evidence="1" type="primary">lacA</name>
    <name type="ordered locus">SAV2195</name>
</gene>
<comment type="catalytic activity">
    <reaction evidence="1">
        <text>aldehydo-D-galactose 6-phosphate = keto-D-tagatose 6-phosphate</text>
        <dbReference type="Rhea" id="RHEA:13033"/>
        <dbReference type="ChEBI" id="CHEBI:58255"/>
        <dbReference type="ChEBI" id="CHEBI:134283"/>
        <dbReference type="EC" id="5.3.1.26"/>
    </reaction>
</comment>
<comment type="pathway">
    <text evidence="1">Carbohydrate metabolism; D-galactose 6-phosphate degradation; D-tagatose 6-phosphate from D-galactose 6-phosphate: step 1/1.</text>
</comment>
<comment type="subunit">
    <text evidence="1">Heteromultimeric protein consisting of LacA and LacB.</text>
</comment>
<comment type="similarity">
    <text evidence="1">Belongs to the LacAB/RpiB family.</text>
</comment>
<feature type="chain" id="PRO_0000208109" description="Galactose-6-phosphate isomerase subunit LacA">
    <location>
        <begin position="1"/>
        <end position="142"/>
    </location>
</feature>
<organism>
    <name type="scientific">Staphylococcus aureus (strain Mu50 / ATCC 700699)</name>
    <dbReference type="NCBI Taxonomy" id="158878"/>
    <lineage>
        <taxon>Bacteria</taxon>
        <taxon>Bacillati</taxon>
        <taxon>Bacillota</taxon>
        <taxon>Bacilli</taxon>
        <taxon>Bacillales</taxon>
        <taxon>Staphylococcaceae</taxon>
        <taxon>Staphylococcus</taxon>
    </lineage>
</organism>
<reference key="1">
    <citation type="journal article" date="2001" name="Lancet">
        <title>Whole genome sequencing of meticillin-resistant Staphylococcus aureus.</title>
        <authorList>
            <person name="Kuroda M."/>
            <person name="Ohta T."/>
            <person name="Uchiyama I."/>
            <person name="Baba T."/>
            <person name="Yuzawa H."/>
            <person name="Kobayashi I."/>
            <person name="Cui L."/>
            <person name="Oguchi A."/>
            <person name="Aoki K."/>
            <person name="Nagai Y."/>
            <person name="Lian J.-Q."/>
            <person name="Ito T."/>
            <person name="Kanamori M."/>
            <person name="Matsumaru H."/>
            <person name="Maruyama A."/>
            <person name="Murakami H."/>
            <person name="Hosoyama A."/>
            <person name="Mizutani-Ui Y."/>
            <person name="Takahashi N.K."/>
            <person name="Sawano T."/>
            <person name="Inoue R."/>
            <person name="Kaito C."/>
            <person name="Sekimizu K."/>
            <person name="Hirakawa H."/>
            <person name="Kuhara S."/>
            <person name="Goto S."/>
            <person name="Yabuzaki J."/>
            <person name="Kanehisa M."/>
            <person name="Yamashita A."/>
            <person name="Oshima K."/>
            <person name="Furuya K."/>
            <person name="Yoshino C."/>
            <person name="Shiba T."/>
            <person name="Hattori M."/>
            <person name="Ogasawara N."/>
            <person name="Hayashi H."/>
            <person name="Hiramatsu K."/>
        </authorList>
    </citation>
    <scope>NUCLEOTIDE SEQUENCE [LARGE SCALE GENOMIC DNA]</scope>
    <source>
        <strain>Mu50 / ATCC 700699</strain>
    </source>
</reference>
<protein>
    <recommendedName>
        <fullName evidence="1">Galactose-6-phosphate isomerase subunit LacA</fullName>
        <ecNumber evidence="1">5.3.1.26</ecNumber>
    </recommendedName>
</protein>
<proteinExistence type="inferred from homology"/>
<name>LACA_STAAM</name>
<dbReference type="EC" id="5.3.1.26" evidence="1"/>
<dbReference type="EMBL" id="BA000017">
    <property type="protein sequence ID" value="BAB58357.1"/>
    <property type="molecule type" value="Genomic_DNA"/>
</dbReference>
<dbReference type="RefSeq" id="WP_000974608.1">
    <property type="nucleotide sequence ID" value="NC_002758.2"/>
</dbReference>
<dbReference type="SMR" id="P65250"/>
<dbReference type="GeneID" id="98347039"/>
<dbReference type="KEGG" id="sav:SAV2195"/>
<dbReference type="HOGENOM" id="CLU_091396_4_2_9"/>
<dbReference type="PhylomeDB" id="P65250"/>
<dbReference type="UniPathway" id="UPA00702">
    <property type="reaction ID" value="UER00714"/>
</dbReference>
<dbReference type="Proteomes" id="UP000002481">
    <property type="component" value="Chromosome"/>
</dbReference>
<dbReference type="GO" id="GO:0050044">
    <property type="term" value="F:galactose-6-phosphate isomerase activity"/>
    <property type="evidence" value="ECO:0007669"/>
    <property type="project" value="UniProtKB-UniRule"/>
</dbReference>
<dbReference type="GO" id="GO:0004751">
    <property type="term" value="F:ribose-5-phosphate isomerase activity"/>
    <property type="evidence" value="ECO:0007669"/>
    <property type="project" value="TreeGrafter"/>
</dbReference>
<dbReference type="GO" id="GO:0019316">
    <property type="term" value="P:D-allose catabolic process"/>
    <property type="evidence" value="ECO:0007669"/>
    <property type="project" value="TreeGrafter"/>
</dbReference>
<dbReference type="GO" id="GO:0019388">
    <property type="term" value="P:galactose catabolic process"/>
    <property type="evidence" value="ECO:0007669"/>
    <property type="project" value="UniProtKB-UniPathway"/>
</dbReference>
<dbReference type="GO" id="GO:0019512">
    <property type="term" value="P:lactose catabolic process via tagatose-6-phosphate"/>
    <property type="evidence" value="ECO:0007669"/>
    <property type="project" value="UniProtKB-UniRule"/>
</dbReference>
<dbReference type="GO" id="GO:0009052">
    <property type="term" value="P:pentose-phosphate shunt, non-oxidative branch"/>
    <property type="evidence" value="ECO:0007669"/>
    <property type="project" value="TreeGrafter"/>
</dbReference>
<dbReference type="Gene3D" id="3.40.1400.10">
    <property type="entry name" value="Sugar-phosphate isomerase, RpiB/LacA/LacB"/>
    <property type="match status" value="1"/>
</dbReference>
<dbReference type="HAMAP" id="MF_01555">
    <property type="entry name" value="LacA"/>
    <property type="match status" value="1"/>
</dbReference>
<dbReference type="InterPro" id="IPR004783">
    <property type="entry name" value="LacA"/>
</dbReference>
<dbReference type="InterPro" id="IPR003500">
    <property type="entry name" value="RpiB_LacA_LacB"/>
</dbReference>
<dbReference type="InterPro" id="IPR036569">
    <property type="entry name" value="RpiB_LacA_LacB_sf"/>
</dbReference>
<dbReference type="NCBIfam" id="TIGR01118">
    <property type="entry name" value="lacA"/>
    <property type="match status" value="1"/>
</dbReference>
<dbReference type="NCBIfam" id="NF006380">
    <property type="entry name" value="PRK08621.1"/>
    <property type="match status" value="1"/>
</dbReference>
<dbReference type="NCBIfam" id="TIGR00689">
    <property type="entry name" value="rpiB_lacA_lacB"/>
    <property type="match status" value="1"/>
</dbReference>
<dbReference type="PANTHER" id="PTHR30345:SF5">
    <property type="entry name" value="GALACTOSE-6-PHOSPHATE ISOMERASE SUBUNIT LACA"/>
    <property type="match status" value="1"/>
</dbReference>
<dbReference type="PANTHER" id="PTHR30345">
    <property type="entry name" value="RIBOSE-5-PHOSPHATE ISOMERASE B"/>
    <property type="match status" value="1"/>
</dbReference>
<dbReference type="Pfam" id="PF02502">
    <property type="entry name" value="LacAB_rpiB"/>
    <property type="match status" value="1"/>
</dbReference>
<dbReference type="PIRSF" id="PIRSF005384">
    <property type="entry name" value="RpiB_LacA_B"/>
    <property type="match status" value="1"/>
</dbReference>
<dbReference type="SUPFAM" id="SSF89623">
    <property type="entry name" value="Ribose/Galactose isomerase RpiB/AlsB"/>
    <property type="match status" value="1"/>
</dbReference>